<dbReference type="EMBL" id="AC113977">
    <property type="status" value="NOT_ANNOTATED_CDS"/>
    <property type="molecule type" value="Genomic_DNA"/>
</dbReference>
<dbReference type="SMR" id="D3YXS5"/>
<dbReference type="FunCoup" id="D3YXS5">
    <property type="interactions" value="9"/>
</dbReference>
<dbReference type="STRING" id="10090.ENSMUSP00000152770"/>
<dbReference type="PaxDb" id="10090-ENSMUSP00000118935"/>
<dbReference type="PeptideAtlas" id="D3YXS5"/>
<dbReference type="ProteomicsDB" id="263533"/>
<dbReference type="AGR" id="MGI:2686151"/>
<dbReference type="MGI" id="MGI:2686151">
    <property type="gene designation" value="Kif28"/>
</dbReference>
<dbReference type="eggNOG" id="KOG0245">
    <property type="taxonomic scope" value="Eukaryota"/>
</dbReference>
<dbReference type="InParanoid" id="D3YXS5"/>
<dbReference type="OrthoDB" id="3176171at2759"/>
<dbReference type="TreeFam" id="TF105223"/>
<dbReference type="Reactome" id="R-MMU-2132295">
    <property type="pathway name" value="MHC class II antigen presentation"/>
</dbReference>
<dbReference type="Reactome" id="R-MMU-6811434">
    <property type="pathway name" value="COPI-dependent Golgi-to-ER retrograde traffic"/>
</dbReference>
<dbReference type="Reactome" id="R-MMU-983189">
    <property type="pathway name" value="Kinesins"/>
</dbReference>
<dbReference type="PRO" id="PR:D3YXS5"/>
<dbReference type="Proteomes" id="UP000000589">
    <property type="component" value="Unplaced"/>
</dbReference>
<dbReference type="RNAct" id="D3YXS5">
    <property type="molecule type" value="protein"/>
</dbReference>
<dbReference type="GO" id="GO:0031966">
    <property type="term" value="C:mitochondrial membrane"/>
    <property type="evidence" value="ECO:0000250"/>
    <property type="project" value="UniProtKB"/>
</dbReference>
<dbReference type="GO" id="GO:0005524">
    <property type="term" value="F:ATP binding"/>
    <property type="evidence" value="ECO:0007669"/>
    <property type="project" value="UniProtKB-KW"/>
</dbReference>
<dbReference type="GO" id="GO:0008017">
    <property type="term" value="F:microtubule binding"/>
    <property type="evidence" value="ECO:0007669"/>
    <property type="project" value="InterPro"/>
</dbReference>
<dbReference type="GO" id="GO:0003777">
    <property type="term" value="F:microtubule motor activity"/>
    <property type="evidence" value="ECO:0007669"/>
    <property type="project" value="InterPro"/>
</dbReference>
<dbReference type="GO" id="GO:0007005">
    <property type="term" value="P:mitochondrion organization"/>
    <property type="evidence" value="ECO:0000250"/>
    <property type="project" value="UniProtKB"/>
</dbReference>
<dbReference type="GO" id="GO:0072384">
    <property type="term" value="P:organelle transport along microtubule"/>
    <property type="evidence" value="ECO:0000250"/>
    <property type="project" value="UniProtKB"/>
</dbReference>
<dbReference type="CDD" id="cd22709">
    <property type="entry name" value="FHA_KIF28P"/>
    <property type="match status" value="1"/>
</dbReference>
<dbReference type="FunFam" id="3.40.850.10:FF:000063">
    <property type="entry name" value="Kinesin-like protein"/>
    <property type="match status" value="1"/>
</dbReference>
<dbReference type="FunFam" id="2.60.200.20:FF:000034">
    <property type="entry name" value="kinesin-like protein KIF28P"/>
    <property type="match status" value="1"/>
</dbReference>
<dbReference type="Gene3D" id="2.60.200.20">
    <property type="match status" value="1"/>
</dbReference>
<dbReference type="Gene3D" id="3.40.850.10">
    <property type="entry name" value="Kinesin motor domain"/>
    <property type="match status" value="1"/>
</dbReference>
<dbReference type="InterPro" id="IPR000253">
    <property type="entry name" value="FHA_dom"/>
</dbReference>
<dbReference type="InterPro" id="IPR022140">
    <property type="entry name" value="Kinesin-like_KIF1-typ"/>
</dbReference>
<dbReference type="InterPro" id="IPR019821">
    <property type="entry name" value="Kinesin_motor_CS"/>
</dbReference>
<dbReference type="InterPro" id="IPR001752">
    <property type="entry name" value="Kinesin_motor_dom"/>
</dbReference>
<dbReference type="InterPro" id="IPR036961">
    <property type="entry name" value="Kinesin_motor_dom_sf"/>
</dbReference>
<dbReference type="InterPro" id="IPR027417">
    <property type="entry name" value="P-loop_NTPase"/>
</dbReference>
<dbReference type="InterPro" id="IPR008984">
    <property type="entry name" value="SMAD_FHA_dom_sf"/>
</dbReference>
<dbReference type="PANTHER" id="PTHR47117">
    <property type="entry name" value="STAR-RELATED LIPID TRANSFER PROTEIN 9"/>
    <property type="match status" value="1"/>
</dbReference>
<dbReference type="Pfam" id="PF00498">
    <property type="entry name" value="FHA"/>
    <property type="match status" value="1"/>
</dbReference>
<dbReference type="Pfam" id="PF12423">
    <property type="entry name" value="KIF1B"/>
    <property type="match status" value="1"/>
</dbReference>
<dbReference type="Pfam" id="PF00225">
    <property type="entry name" value="Kinesin"/>
    <property type="match status" value="1"/>
</dbReference>
<dbReference type="PRINTS" id="PR00380">
    <property type="entry name" value="KINESINHEAVY"/>
</dbReference>
<dbReference type="SMART" id="SM00240">
    <property type="entry name" value="FHA"/>
    <property type="match status" value="1"/>
</dbReference>
<dbReference type="SMART" id="SM00129">
    <property type="entry name" value="KISc"/>
    <property type="match status" value="1"/>
</dbReference>
<dbReference type="SUPFAM" id="SSF52540">
    <property type="entry name" value="P-loop containing nucleoside triphosphate hydrolases"/>
    <property type="match status" value="1"/>
</dbReference>
<dbReference type="SUPFAM" id="SSF49879">
    <property type="entry name" value="SMAD/FHA domain"/>
    <property type="match status" value="1"/>
</dbReference>
<dbReference type="PROSITE" id="PS00411">
    <property type="entry name" value="KINESIN_MOTOR_1"/>
    <property type="match status" value="1"/>
</dbReference>
<dbReference type="PROSITE" id="PS50067">
    <property type="entry name" value="KINESIN_MOTOR_2"/>
    <property type="match status" value="1"/>
</dbReference>
<keyword id="KW-0067">ATP-binding</keyword>
<keyword id="KW-0175">Coiled coil</keyword>
<keyword id="KW-0472">Membrane</keyword>
<keyword id="KW-0496">Mitochondrion</keyword>
<keyword id="KW-0505">Motor protein</keyword>
<keyword id="KW-0547">Nucleotide-binding</keyword>
<keyword id="KW-1185">Reference proteome</keyword>
<keyword id="KW-0813">Transport</keyword>
<protein>
    <recommendedName>
        <fullName evidence="4">Kinesin-like protein KIF28</fullName>
    </recommendedName>
    <alternativeName>
        <fullName evidence="5">Kinesin family member 28</fullName>
    </alternativeName>
    <alternativeName>
        <fullName>Kinesin-like protein 6</fullName>
    </alternativeName>
</protein>
<comment type="function">
    <text evidence="1">Microtubule-dependent motor protein required for mitochondrion morphology and transport of mitochondria in neuronal cells.</text>
</comment>
<comment type="subcellular location">
    <subcellularLocation>
        <location evidence="1">Mitochondrion membrane</location>
        <topology evidence="1">Peripheral membrane protein</topology>
    </subcellularLocation>
</comment>
<comment type="similarity">
    <text evidence="3">Belongs to the TRAFAC class myosin-kinesin ATPase superfamily. Kinesin family.</text>
</comment>
<gene>
    <name evidence="5" type="primary">Kif28</name>
    <name evidence="5" type="synonym">Gm1305</name>
    <name type="synonym">Klp6</name>
</gene>
<sequence>MGRVPVPRSDSVRVAVRVRPFSQREKNSGSQCVISMHSGNISIRDPKNEERVKTFTFDLTYWSHDGFQKDEDGVLIPSDPASKFAGQSDVFHDIGRGILDSAWRGYNATLLAYGQTGSGKSYSMIGFGTNKGLIPRVCEELFQAIEKQKENLEPQVMFSMLEIYNEQIRDLLSRTKAPGGLRVREDQQLGFFVEGLKWVPCENYAQIEKLVEQGSKIRMTASTNMNASSSRSHMLIAIQFKQVFLDTALTKRSSINMVDLAGSERQRSSGSEGDRLREGSRVNLSLTSLGNVISALADLAMGKKVLHIPYRDSVLTKLLQSALGGNSRTTLIAALSPADICYEETLSTLRYAERAKKVRNRAVINTCPLARASRAENALLLGFRGAGAAEHPACFWAEQQLGNQGTWAQLLEQARREWEEQYEALTQEQKMVRILPHLLNVNEDPQLTGVLKFFIHNGSCDVGRAASNAICLQGLGISDKHASFVNLDGKVTVAPHSKCKVIVNGVPVTGRTKLQHLDRIILGSNSAFLYVGFPSERGAEDLSRFDYDFFQLERAAAEGVSVATLGCVSPGDDQADPSILAVFQDYVKLMPLVVEANQMSEELKKGLTMELKVKNLASSDSRGYDLQKEVMVKVTKQGTHEVWIWSKAKFINRKFLMEELYQRFLESRDSHVAQEDDPFWDPLEVVHLGSAHVWLQPLAHCMMLEEQVEFLNCDGLEEAVLHIRITPCSPEGWAHGEEDMVIDPLELLGKRIDFQTHIVRCLGVKWLKEDGSRGIQMGYGIYDLPNTLYTKPVWKSVNPRIEETVHFAALGASREFLDYLLTNALIVDLWGLQEGCAPLGVSQLDVLLTGEGHIMVDTKTFSSVKDVSQITSNQVPELYQKLLKLEQETELLRDVNRALRGENVFLKASLENAGSAPQAQKLDNPEGATRTAAREAKQVCAQQASSDAQLARALKVFYQGMGVARGQLLRLRRCRPPEDDQMLRPFVHQQSQMLKDLEDLLESSLHKLKADVAFIVKKRKEYLLPSQQ</sequence>
<organism>
    <name type="scientific">Mus musculus</name>
    <name type="common">Mouse</name>
    <dbReference type="NCBI Taxonomy" id="10090"/>
    <lineage>
        <taxon>Eukaryota</taxon>
        <taxon>Metazoa</taxon>
        <taxon>Chordata</taxon>
        <taxon>Craniata</taxon>
        <taxon>Vertebrata</taxon>
        <taxon>Euteleostomi</taxon>
        <taxon>Mammalia</taxon>
        <taxon>Eutheria</taxon>
        <taxon>Euarchontoglires</taxon>
        <taxon>Glires</taxon>
        <taxon>Rodentia</taxon>
        <taxon>Myomorpha</taxon>
        <taxon>Muroidea</taxon>
        <taxon>Muridae</taxon>
        <taxon>Murinae</taxon>
        <taxon>Mus</taxon>
        <taxon>Mus</taxon>
    </lineage>
</organism>
<feature type="chain" id="PRO_0000415570" description="Kinesin-like protein KIF28">
    <location>
        <begin position="1"/>
        <end position="1028"/>
    </location>
</feature>
<feature type="domain" description="Kinesin motor" evidence="3">
    <location>
        <begin position="11"/>
        <end position="358"/>
    </location>
</feature>
<feature type="domain" description="FHA">
    <location>
        <begin position="460"/>
        <end position="523"/>
    </location>
</feature>
<feature type="coiled-coil region" evidence="2">
    <location>
        <begin position="873"/>
        <end position="902"/>
    </location>
</feature>
<feature type="binding site" evidence="3">
    <location>
        <begin position="114"/>
        <end position="121"/>
    </location>
    <ligand>
        <name>ATP</name>
        <dbReference type="ChEBI" id="CHEBI:30616"/>
    </ligand>
</feature>
<evidence type="ECO:0000250" key="1">
    <source>
        <dbReference type="UniProtKB" id="F8WLE0"/>
    </source>
</evidence>
<evidence type="ECO:0000255" key="2"/>
<evidence type="ECO:0000255" key="3">
    <source>
        <dbReference type="PROSITE-ProRule" id="PRU00283"/>
    </source>
</evidence>
<evidence type="ECO:0000305" key="4"/>
<evidence type="ECO:0000312" key="5">
    <source>
        <dbReference type="MGI" id="MGI:2686151"/>
    </source>
</evidence>
<accession>D3YXS5</accession>
<proteinExistence type="inferred from homology"/>
<name>KIF28_MOUSE</name>
<reference key="1">
    <citation type="journal article" date="2009" name="PLoS Biol.">
        <title>Lineage-specific biology revealed by a finished genome assembly of the mouse.</title>
        <authorList>
            <person name="Church D.M."/>
            <person name="Goodstadt L."/>
            <person name="Hillier L.W."/>
            <person name="Zody M.C."/>
            <person name="Goldstein S."/>
            <person name="She X."/>
            <person name="Bult C.J."/>
            <person name="Agarwala R."/>
            <person name="Cherry J.L."/>
            <person name="DiCuccio M."/>
            <person name="Hlavina W."/>
            <person name="Kapustin Y."/>
            <person name="Meric P."/>
            <person name="Maglott D."/>
            <person name="Birtle Z."/>
            <person name="Marques A.C."/>
            <person name="Graves T."/>
            <person name="Zhou S."/>
            <person name="Teague B."/>
            <person name="Potamousis K."/>
            <person name="Churas C."/>
            <person name="Place M."/>
            <person name="Herschleb J."/>
            <person name="Runnheim R."/>
            <person name="Forrest D."/>
            <person name="Amos-Landgraf J."/>
            <person name="Schwartz D.C."/>
            <person name="Cheng Z."/>
            <person name="Lindblad-Toh K."/>
            <person name="Eichler E.E."/>
            <person name="Ponting C.P."/>
        </authorList>
    </citation>
    <scope>NUCLEOTIDE SEQUENCE [LARGE SCALE GENOMIC DNA]</scope>
    <source>
        <strain>C57BL/6J</strain>
    </source>
</reference>